<proteinExistence type="inferred from homology"/>
<name>HUTU_BRUMB</name>
<keyword id="KW-0963">Cytoplasm</keyword>
<keyword id="KW-0369">Histidine metabolism</keyword>
<keyword id="KW-0456">Lyase</keyword>
<keyword id="KW-0520">NAD</keyword>
<accession>C0RM77</accession>
<comment type="function">
    <text evidence="1">Catalyzes the conversion of urocanate to 4-imidazolone-5-propionate.</text>
</comment>
<comment type="catalytic activity">
    <reaction evidence="1">
        <text>4-imidazolone-5-propanoate = trans-urocanate + H2O</text>
        <dbReference type="Rhea" id="RHEA:13101"/>
        <dbReference type="ChEBI" id="CHEBI:15377"/>
        <dbReference type="ChEBI" id="CHEBI:17771"/>
        <dbReference type="ChEBI" id="CHEBI:77893"/>
        <dbReference type="EC" id="4.2.1.49"/>
    </reaction>
</comment>
<comment type="cofactor">
    <cofactor evidence="1">
        <name>NAD(+)</name>
        <dbReference type="ChEBI" id="CHEBI:57540"/>
    </cofactor>
    <text evidence="1">Binds 1 NAD(+) per subunit.</text>
</comment>
<comment type="pathway">
    <text evidence="1">Amino-acid degradation; L-histidine degradation into L-glutamate; N-formimidoyl-L-glutamate from L-histidine: step 2/3.</text>
</comment>
<comment type="subcellular location">
    <subcellularLocation>
        <location evidence="1">Cytoplasm</location>
    </subcellularLocation>
</comment>
<comment type="similarity">
    <text evidence="1">Belongs to the urocanase family.</text>
</comment>
<evidence type="ECO:0000255" key="1">
    <source>
        <dbReference type="HAMAP-Rule" id="MF_00577"/>
    </source>
</evidence>
<evidence type="ECO:0000256" key="2">
    <source>
        <dbReference type="SAM" id="MobiDB-lite"/>
    </source>
</evidence>
<protein>
    <recommendedName>
        <fullName evidence="1">Urocanate hydratase</fullName>
        <shortName evidence="1">Urocanase</shortName>
        <ecNumber evidence="1">4.2.1.49</ecNumber>
    </recommendedName>
    <alternativeName>
        <fullName evidence="1">Imidazolonepropionate hydrolase</fullName>
    </alternativeName>
</protein>
<gene>
    <name evidence="1" type="primary">hutU</name>
    <name type="ordered locus">BMEA_B0916</name>
</gene>
<reference key="1">
    <citation type="submission" date="2009-03" db="EMBL/GenBank/DDBJ databases">
        <title>Brucella melitensis ATCC 23457 whole genome shotgun sequencing project.</title>
        <authorList>
            <person name="Setubal J.C."/>
            <person name="Boyle S."/>
            <person name="Crasta O.R."/>
            <person name="Gillespie J.J."/>
            <person name="Kenyon R.W."/>
            <person name="Lu J."/>
            <person name="Mane S."/>
            <person name="Nagrani S."/>
            <person name="Shallom J.M."/>
            <person name="Shallom S."/>
            <person name="Shukla M."/>
            <person name="Snyder E.E."/>
            <person name="Sobral B.W."/>
            <person name="Wattam A.R."/>
            <person name="Will R."/>
            <person name="Williams K."/>
            <person name="Yoo H."/>
            <person name="Munk C."/>
            <person name="Tapia R."/>
            <person name="Han C."/>
            <person name="Detter J.C."/>
            <person name="Bruce D."/>
            <person name="Brettin T.S."/>
        </authorList>
    </citation>
    <scope>NUCLEOTIDE SEQUENCE [LARGE SCALE GENOMIC DNA]</scope>
    <source>
        <strain>ATCC 23457</strain>
    </source>
</reference>
<organism>
    <name type="scientific">Brucella melitensis biotype 2 (strain ATCC 23457)</name>
    <dbReference type="NCBI Taxonomy" id="546272"/>
    <lineage>
        <taxon>Bacteria</taxon>
        <taxon>Pseudomonadati</taxon>
        <taxon>Pseudomonadota</taxon>
        <taxon>Alphaproteobacteria</taxon>
        <taxon>Hyphomicrobiales</taxon>
        <taxon>Brucellaceae</taxon>
        <taxon>Brucella/Ochrobactrum group</taxon>
        <taxon>Brucella</taxon>
    </lineage>
</organism>
<sequence>MSNPRHNEREVRSPRGDELNAKSWLTEAPLRMLMNNLDPDVAERPHELVVYGGIGRAARTWDDFDRIVATLKTLNDDETLLVQSGKPVGVFRTHKDAPRVLIANSNLVPHWANWDHFNELDKKGLAMYGQMTAGSWIYIGAQGIVQGTYETFVEAGRQHYGGNLKGRWILTGGLGGMGGAQPLAAVMAGACCLAVECDETRADFRLRTRYVDEKTHSLDEALAKIDAWTKAGEAKSIALIGNAAEIFPELVKRGVKPDIVTDQTSAHDPVHGYLPLGWTVAEWRAKQENDPKAVEKAARASMKVQVQAMLDFWNAGIPTVDYGNNIRQMALEEGLENAFAFPGFVPAYIRPLFCRGIGPFRWAALSGDPEDIAKTDAKVKELLPDNKHLHNWLDMAKERIAFQGLPARICWVGLGDRHRLGLAFNEMVRNGELKAPIVIGRDHLDSGSVASPNRKTEAMKDGSDAVSDWPLLNALLNTASGATWVSLHHGGGVGMGFSQHAGMVICCDGTEDADRRLERVLWNDPATGVMRHADAGYDIALDWARKQGLRLPAILGN</sequence>
<dbReference type="EC" id="4.2.1.49" evidence="1"/>
<dbReference type="EMBL" id="CP001489">
    <property type="protein sequence ID" value="ACO02710.1"/>
    <property type="molecule type" value="Genomic_DNA"/>
</dbReference>
<dbReference type="RefSeq" id="WP_004685970.1">
    <property type="nucleotide sequence ID" value="NC_012442.1"/>
</dbReference>
<dbReference type="SMR" id="C0RM77"/>
<dbReference type="KEGG" id="bmi:BMEA_B0916"/>
<dbReference type="HOGENOM" id="CLU_018868_0_1_5"/>
<dbReference type="UniPathway" id="UPA00379">
    <property type="reaction ID" value="UER00550"/>
</dbReference>
<dbReference type="Proteomes" id="UP000001748">
    <property type="component" value="Chromosome II"/>
</dbReference>
<dbReference type="GO" id="GO:0005737">
    <property type="term" value="C:cytoplasm"/>
    <property type="evidence" value="ECO:0007669"/>
    <property type="project" value="UniProtKB-SubCell"/>
</dbReference>
<dbReference type="GO" id="GO:0016153">
    <property type="term" value="F:urocanate hydratase activity"/>
    <property type="evidence" value="ECO:0007669"/>
    <property type="project" value="UniProtKB-UniRule"/>
</dbReference>
<dbReference type="GO" id="GO:0019556">
    <property type="term" value="P:L-histidine catabolic process to glutamate and formamide"/>
    <property type="evidence" value="ECO:0007669"/>
    <property type="project" value="UniProtKB-UniPathway"/>
</dbReference>
<dbReference type="GO" id="GO:0019557">
    <property type="term" value="P:L-histidine catabolic process to glutamate and formate"/>
    <property type="evidence" value="ECO:0007669"/>
    <property type="project" value="UniProtKB-UniPathway"/>
</dbReference>
<dbReference type="FunFam" id="3.40.50.10730:FF:000001">
    <property type="entry name" value="Urocanate hydratase"/>
    <property type="match status" value="1"/>
</dbReference>
<dbReference type="Gene3D" id="3.40.50.10730">
    <property type="entry name" value="Urocanase like domains"/>
    <property type="match status" value="1"/>
</dbReference>
<dbReference type="Gene3D" id="3.40.1770.10">
    <property type="entry name" value="Urocanase superfamily"/>
    <property type="match status" value="1"/>
</dbReference>
<dbReference type="HAMAP" id="MF_00577">
    <property type="entry name" value="HutU"/>
    <property type="match status" value="1"/>
</dbReference>
<dbReference type="InterPro" id="IPR055351">
    <property type="entry name" value="Urocanase"/>
</dbReference>
<dbReference type="InterPro" id="IPR023637">
    <property type="entry name" value="Urocanase-like"/>
</dbReference>
<dbReference type="InterPro" id="IPR035401">
    <property type="entry name" value="Urocanase_C"/>
</dbReference>
<dbReference type="InterPro" id="IPR038364">
    <property type="entry name" value="Urocanase_central_sf"/>
</dbReference>
<dbReference type="InterPro" id="IPR035400">
    <property type="entry name" value="Urocanase_N"/>
</dbReference>
<dbReference type="InterPro" id="IPR035085">
    <property type="entry name" value="Urocanase_Rossmann-like"/>
</dbReference>
<dbReference type="InterPro" id="IPR036190">
    <property type="entry name" value="Urocanase_sf"/>
</dbReference>
<dbReference type="NCBIfam" id="TIGR01228">
    <property type="entry name" value="hutU"/>
    <property type="match status" value="1"/>
</dbReference>
<dbReference type="NCBIfam" id="NF003820">
    <property type="entry name" value="PRK05414.1"/>
    <property type="match status" value="1"/>
</dbReference>
<dbReference type="PANTHER" id="PTHR12216">
    <property type="entry name" value="UROCANATE HYDRATASE"/>
    <property type="match status" value="1"/>
</dbReference>
<dbReference type="PANTHER" id="PTHR12216:SF4">
    <property type="entry name" value="UROCANATE HYDRATASE"/>
    <property type="match status" value="1"/>
</dbReference>
<dbReference type="Pfam" id="PF01175">
    <property type="entry name" value="Urocanase"/>
    <property type="match status" value="1"/>
</dbReference>
<dbReference type="Pfam" id="PF17392">
    <property type="entry name" value="Urocanase_C"/>
    <property type="match status" value="1"/>
</dbReference>
<dbReference type="Pfam" id="PF17391">
    <property type="entry name" value="Urocanase_N"/>
    <property type="match status" value="1"/>
</dbReference>
<dbReference type="PIRSF" id="PIRSF001423">
    <property type="entry name" value="Urocanate_hydrat"/>
    <property type="match status" value="1"/>
</dbReference>
<dbReference type="SUPFAM" id="SSF111326">
    <property type="entry name" value="Urocanase"/>
    <property type="match status" value="1"/>
</dbReference>
<feature type="chain" id="PRO_1000199898" description="Urocanate hydratase">
    <location>
        <begin position="1"/>
        <end position="557"/>
    </location>
</feature>
<feature type="region of interest" description="Disordered" evidence="2">
    <location>
        <begin position="1"/>
        <end position="20"/>
    </location>
</feature>
<feature type="active site" evidence="1">
    <location>
        <position position="410"/>
    </location>
</feature>
<feature type="binding site" evidence="1">
    <location>
        <begin position="52"/>
        <end position="53"/>
    </location>
    <ligand>
        <name>NAD(+)</name>
        <dbReference type="ChEBI" id="CHEBI:57540"/>
    </ligand>
</feature>
<feature type="binding site" evidence="1">
    <location>
        <position position="130"/>
    </location>
    <ligand>
        <name>NAD(+)</name>
        <dbReference type="ChEBI" id="CHEBI:57540"/>
    </ligand>
</feature>
<feature type="binding site" evidence="1">
    <location>
        <begin position="176"/>
        <end position="178"/>
    </location>
    <ligand>
        <name>NAD(+)</name>
        <dbReference type="ChEBI" id="CHEBI:57540"/>
    </ligand>
</feature>
<feature type="binding site" evidence="1">
    <location>
        <position position="196"/>
    </location>
    <ligand>
        <name>NAD(+)</name>
        <dbReference type="ChEBI" id="CHEBI:57540"/>
    </ligand>
</feature>
<feature type="binding site" evidence="1">
    <location>
        <position position="201"/>
    </location>
    <ligand>
        <name>NAD(+)</name>
        <dbReference type="ChEBI" id="CHEBI:57540"/>
    </ligand>
</feature>
<feature type="binding site" evidence="1">
    <location>
        <begin position="242"/>
        <end position="243"/>
    </location>
    <ligand>
        <name>NAD(+)</name>
        <dbReference type="ChEBI" id="CHEBI:57540"/>
    </ligand>
</feature>
<feature type="binding site" evidence="1">
    <location>
        <begin position="263"/>
        <end position="267"/>
    </location>
    <ligand>
        <name>NAD(+)</name>
        <dbReference type="ChEBI" id="CHEBI:57540"/>
    </ligand>
</feature>
<feature type="binding site" evidence="1">
    <location>
        <begin position="273"/>
        <end position="274"/>
    </location>
    <ligand>
        <name>NAD(+)</name>
        <dbReference type="ChEBI" id="CHEBI:57540"/>
    </ligand>
</feature>
<feature type="binding site" evidence="1">
    <location>
        <position position="322"/>
    </location>
    <ligand>
        <name>NAD(+)</name>
        <dbReference type="ChEBI" id="CHEBI:57540"/>
    </ligand>
</feature>
<feature type="binding site" evidence="1">
    <location>
        <position position="492"/>
    </location>
    <ligand>
        <name>NAD(+)</name>
        <dbReference type="ChEBI" id="CHEBI:57540"/>
    </ligand>
</feature>